<protein>
    <recommendedName>
        <fullName evidence="1">2-(5''-triphosphoribosyl)-3'-dephosphocoenzyme-A synthase</fullName>
        <shortName evidence="1">2-(5''-triphosphoribosyl)-3'-dephospho-CoA synthase</shortName>
        <ecNumber evidence="1">2.4.2.52</ecNumber>
    </recommendedName>
</protein>
<sequence>MSMPATSTKTTKLATSLIDEYALLGWRAMLTEVNLSPKPGLVDRINCGAHKDMALEDFHRSALAIQGWLPRFIEFGACSAEMAPEAVLHGLRPIGMACEGDMFRATAGVNTHKGSIFSLGLLCAAIGRLLQLNQSLTPTTVCSTAASFCRGLTDRELRTNNSQLTAGQRLYQQLGLTGARGEAEAGYPLVINHALPHYLTLLDQGLDPELALLDTLLLLMAINGDTNVASRGGEGGLRWLQREAQTLLQKGGIRTPADLDYLRQFDRECIERNLSPGGSADLLILTWFLAQI</sequence>
<comment type="function">
    <text evidence="1">Catalyzes the formation of 2-(5''-triphosphoribosyl)-3'-dephosphocoenzyme-A, the precursor of the prosthetic group of the holo-acyl carrier protein (gamma chain) of citrate lyase, from ATP and dephospho-CoA.</text>
</comment>
<comment type="catalytic activity">
    <reaction evidence="1">
        <text>3'-dephospho-CoA + ATP = 2'-(5''-triphospho-alpha-D-ribosyl)-3'-dephospho-CoA + adenine</text>
        <dbReference type="Rhea" id="RHEA:15117"/>
        <dbReference type="ChEBI" id="CHEBI:16708"/>
        <dbReference type="ChEBI" id="CHEBI:30616"/>
        <dbReference type="ChEBI" id="CHEBI:57328"/>
        <dbReference type="ChEBI" id="CHEBI:61378"/>
        <dbReference type="EC" id="2.4.2.52"/>
    </reaction>
</comment>
<comment type="similarity">
    <text evidence="1">Belongs to the CitG/MdcB family.</text>
</comment>
<reference key="1">
    <citation type="journal article" date="2009" name="PLoS Genet.">
        <title>Organised genome dynamics in the Escherichia coli species results in highly diverse adaptive paths.</title>
        <authorList>
            <person name="Touchon M."/>
            <person name="Hoede C."/>
            <person name="Tenaillon O."/>
            <person name="Barbe V."/>
            <person name="Baeriswyl S."/>
            <person name="Bidet P."/>
            <person name="Bingen E."/>
            <person name="Bonacorsi S."/>
            <person name="Bouchier C."/>
            <person name="Bouvet O."/>
            <person name="Calteau A."/>
            <person name="Chiapello H."/>
            <person name="Clermont O."/>
            <person name="Cruveiller S."/>
            <person name="Danchin A."/>
            <person name="Diard M."/>
            <person name="Dossat C."/>
            <person name="Karoui M.E."/>
            <person name="Frapy E."/>
            <person name="Garry L."/>
            <person name="Ghigo J.M."/>
            <person name="Gilles A.M."/>
            <person name="Johnson J."/>
            <person name="Le Bouguenec C."/>
            <person name="Lescat M."/>
            <person name="Mangenot S."/>
            <person name="Martinez-Jehanne V."/>
            <person name="Matic I."/>
            <person name="Nassif X."/>
            <person name="Oztas S."/>
            <person name="Petit M.A."/>
            <person name="Pichon C."/>
            <person name="Rouy Z."/>
            <person name="Ruf C.S."/>
            <person name="Schneider D."/>
            <person name="Tourret J."/>
            <person name="Vacherie B."/>
            <person name="Vallenet D."/>
            <person name="Medigue C."/>
            <person name="Rocha E.P.C."/>
            <person name="Denamur E."/>
        </authorList>
    </citation>
    <scope>NUCLEOTIDE SEQUENCE [LARGE SCALE GENOMIC DNA]</scope>
    <source>
        <strain>UMN026 / ExPEC</strain>
    </source>
</reference>
<name>CITG_ECOLU</name>
<accession>B7N9L9</accession>
<feature type="chain" id="PRO_1000123222" description="2-(5''-triphosphoribosyl)-3'-dephosphocoenzyme-A synthase">
    <location>
        <begin position="1"/>
        <end position="292"/>
    </location>
</feature>
<evidence type="ECO:0000255" key="1">
    <source>
        <dbReference type="HAMAP-Rule" id="MF_00397"/>
    </source>
</evidence>
<proteinExistence type="inferred from homology"/>
<gene>
    <name evidence="1" type="primary">citG</name>
    <name type="ordered locus">ECUMN_0706</name>
</gene>
<dbReference type="EC" id="2.4.2.52" evidence="1"/>
<dbReference type="EMBL" id="CU928163">
    <property type="protein sequence ID" value="CAR11920.1"/>
    <property type="molecule type" value="Genomic_DNA"/>
</dbReference>
<dbReference type="RefSeq" id="WP_000062464.1">
    <property type="nucleotide sequence ID" value="NC_011751.1"/>
</dbReference>
<dbReference type="RefSeq" id="YP_002411466.1">
    <property type="nucleotide sequence ID" value="NC_011751.1"/>
</dbReference>
<dbReference type="STRING" id="585056.ECUMN_0706"/>
<dbReference type="KEGG" id="eum:ECUMN_0706"/>
<dbReference type="PATRIC" id="fig|585056.7.peg.904"/>
<dbReference type="HOGENOM" id="CLU_056179_1_0_6"/>
<dbReference type="Proteomes" id="UP000007097">
    <property type="component" value="Chromosome"/>
</dbReference>
<dbReference type="GO" id="GO:0005524">
    <property type="term" value="F:ATP binding"/>
    <property type="evidence" value="ECO:0007669"/>
    <property type="project" value="UniProtKB-KW"/>
</dbReference>
<dbReference type="GO" id="GO:0046917">
    <property type="term" value="F:triphosphoribosyl-dephospho-CoA synthase activity"/>
    <property type="evidence" value="ECO:0007669"/>
    <property type="project" value="UniProtKB-UniRule"/>
</dbReference>
<dbReference type="GO" id="GO:0051191">
    <property type="term" value="P:prosthetic group biosynthetic process"/>
    <property type="evidence" value="ECO:0007669"/>
    <property type="project" value="TreeGrafter"/>
</dbReference>
<dbReference type="FunFam" id="1.10.4200.10:FF:000001">
    <property type="entry name" value="Triphosphoribosyl-dephospho-CoA synthase CitG"/>
    <property type="match status" value="1"/>
</dbReference>
<dbReference type="Gene3D" id="1.10.4200.10">
    <property type="entry name" value="Triphosphoribosyl-dephospho-CoA protein"/>
    <property type="match status" value="1"/>
</dbReference>
<dbReference type="HAMAP" id="MF_00397">
    <property type="entry name" value="CitG"/>
    <property type="match status" value="1"/>
</dbReference>
<dbReference type="InterPro" id="IPR002736">
    <property type="entry name" value="CitG"/>
</dbReference>
<dbReference type="InterPro" id="IPR017551">
    <property type="entry name" value="TriPribosyl-deP-CoA_syn_CitG"/>
</dbReference>
<dbReference type="NCBIfam" id="TIGR03125">
    <property type="entry name" value="citrate_citG"/>
    <property type="match status" value="1"/>
</dbReference>
<dbReference type="NCBIfam" id="NF007503">
    <property type="entry name" value="PRK10096.1"/>
    <property type="match status" value="1"/>
</dbReference>
<dbReference type="PANTHER" id="PTHR30201:SF2">
    <property type="entry name" value="2-(5''-TRIPHOSPHORIBOSYL)-3'-DEPHOSPHOCOENZYME-A SYNTHASE"/>
    <property type="match status" value="1"/>
</dbReference>
<dbReference type="PANTHER" id="PTHR30201">
    <property type="entry name" value="TRIPHOSPHORIBOSYL-DEPHOSPHO-COA SYNTHASE"/>
    <property type="match status" value="1"/>
</dbReference>
<dbReference type="Pfam" id="PF01874">
    <property type="entry name" value="CitG"/>
    <property type="match status" value="1"/>
</dbReference>
<keyword id="KW-0067">ATP-binding</keyword>
<keyword id="KW-0547">Nucleotide-binding</keyword>
<keyword id="KW-0808">Transferase</keyword>
<organism>
    <name type="scientific">Escherichia coli O17:K52:H18 (strain UMN026 / ExPEC)</name>
    <dbReference type="NCBI Taxonomy" id="585056"/>
    <lineage>
        <taxon>Bacteria</taxon>
        <taxon>Pseudomonadati</taxon>
        <taxon>Pseudomonadota</taxon>
        <taxon>Gammaproteobacteria</taxon>
        <taxon>Enterobacterales</taxon>
        <taxon>Enterobacteriaceae</taxon>
        <taxon>Escherichia</taxon>
    </lineage>
</organism>